<comment type="function">
    <text evidence="1">Catalyzes the transfer of the enolpyruvyl moiety of phosphoenolpyruvate (PEP) to the 5-hydroxyl of shikimate-3-phosphate (S3P) to produce enolpyruvyl shikimate-3-phosphate and inorganic phosphate.</text>
</comment>
<comment type="catalytic activity">
    <reaction evidence="1">
        <text>3-phosphoshikimate + phosphoenolpyruvate = 5-O-(1-carboxyvinyl)-3-phosphoshikimate + phosphate</text>
        <dbReference type="Rhea" id="RHEA:21256"/>
        <dbReference type="ChEBI" id="CHEBI:43474"/>
        <dbReference type="ChEBI" id="CHEBI:57701"/>
        <dbReference type="ChEBI" id="CHEBI:58702"/>
        <dbReference type="ChEBI" id="CHEBI:145989"/>
        <dbReference type="EC" id="2.5.1.19"/>
    </reaction>
    <physiologicalReaction direction="left-to-right" evidence="1">
        <dbReference type="Rhea" id="RHEA:21257"/>
    </physiologicalReaction>
</comment>
<comment type="pathway">
    <text evidence="1">Metabolic intermediate biosynthesis; chorismate biosynthesis; chorismate from D-erythrose 4-phosphate and phosphoenolpyruvate: step 6/7.</text>
</comment>
<comment type="subunit">
    <text evidence="1">Monomer.</text>
</comment>
<comment type="subcellular location">
    <subcellularLocation>
        <location evidence="1">Cytoplasm</location>
    </subcellularLocation>
</comment>
<comment type="similarity">
    <text evidence="1">Belongs to the EPSP synthase family.</text>
</comment>
<comment type="sequence caution" evidence="2">
    <conflict type="erroneous initiation">
        <sequence resource="EMBL-CDS" id="AAK27445"/>
    </conflict>
    <text>Extended N-terminus.</text>
</comment>
<protein>
    <recommendedName>
        <fullName evidence="1">3-phosphoshikimate 1-carboxyvinyltransferase</fullName>
        <ecNumber evidence="1">2.5.1.19</ecNumber>
    </recommendedName>
    <alternativeName>
        <fullName evidence="1">5-enolpyruvylshikimate-3-phosphate synthase</fullName>
        <shortName evidence="1">EPSP synthase</shortName>
        <shortName evidence="1">EPSPS</shortName>
    </alternativeName>
</protein>
<organism>
    <name type="scientific">Brucella abortus (strain 2308)</name>
    <dbReference type="NCBI Taxonomy" id="359391"/>
    <lineage>
        <taxon>Bacteria</taxon>
        <taxon>Pseudomonadati</taxon>
        <taxon>Pseudomonadota</taxon>
        <taxon>Alphaproteobacteria</taxon>
        <taxon>Hyphomicrobiales</taxon>
        <taxon>Brucellaceae</taxon>
        <taxon>Brucella/Ochrobactrum group</taxon>
        <taxon>Brucella</taxon>
    </lineage>
</organism>
<gene>
    <name evidence="1" type="primary">aroA</name>
    <name type="ordered locus">BAB1_0023</name>
</gene>
<name>AROA_BRUA2</name>
<dbReference type="EC" id="2.5.1.19" evidence="1"/>
<dbReference type="EMBL" id="AF326475">
    <property type="protein sequence ID" value="AAK27445.1"/>
    <property type="status" value="ALT_INIT"/>
    <property type="molecule type" value="Genomic_DNA"/>
</dbReference>
<dbReference type="EMBL" id="AM040264">
    <property type="protein sequence ID" value="CAJ09979.1"/>
    <property type="molecule type" value="Genomic_DNA"/>
</dbReference>
<dbReference type="RefSeq" id="WP_002965272.1">
    <property type="nucleotide sequence ID" value="NZ_KN046823.1"/>
</dbReference>
<dbReference type="SMR" id="Q2YPN6"/>
<dbReference type="STRING" id="359391.BAB1_0023"/>
<dbReference type="GeneID" id="93017491"/>
<dbReference type="KEGG" id="bmf:BAB1_0023"/>
<dbReference type="PATRIC" id="fig|359391.11.peg.1446"/>
<dbReference type="HOGENOM" id="CLU_024321_0_1_5"/>
<dbReference type="PhylomeDB" id="Q2YPN6"/>
<dbReference type="UniPathway" id="UPA00053">
    <property type="reaction ID" value="UER00089"/>
</dbReference>
<dbReference type="Proteomes" id="UP000002719">
    <property type="component" value="Chromosome I"/>
</dbReference>
<dbReference type="GO" id="GO:0005737">
    <property type="term" value="C:cytoplasm"/>
    <property type="evidence" value="ECO:0007669"/>
    <property type="project" value="UniProtKB-SubCell"/>
</dbReference>
<dbReference type="GO" id="GO:0003866">
    <property type="term" value="F:3-phosphoshikimate 1-carboxyvinyltransferase activity"/>
    <property type="evidence" value="ECO:0007669"/>
    <property type="project" value="UniProtKB-UniRule"/>
</dbReference>
<dbReference type="GO" id="GO:0008652">
    <property type="term" value="P:amino acid biosynthetic process"/>
    <property type="evidence" value="ECO:0007669"/>
    <property type="project" value="UniProtKB-KW"/>
</dbReference>
<dbReference type="GO" id="GO:0009073">
    <property type="term" value="P:aromatic amino acid family biosynthetic process"/>
    <property type="evidence" value="ECO:0007669"/>
    <property type="project" value="UniProtKB-KW"/>
</dbReference>
<dbReference type="GO" id="GO:0009423">
    <property type="term" value="P:chorismate biosynthetic process"/>
    <property type="evidence" value="ECO:0007669"/>
    <property type="project" value="UniProtKB-UniRule"/>
</dbReference>
<dbReference type="CDD" id="cd01556">
    <property type="entry name" value="EPSP_synthase"/>
    <property type="match status" value="1"/>
</dbReference>
<dbReference type="FunFam" id="3.65.10.10:FF:000006">
    <property type="entry name" value="3-phosphoshikimate 1-carboxyvinyltransferase"/>
    <property type="match status" value="1"/>
</dbReference>
<dbReference type="Gene3D" id="3.65.10.10">
    <property type="entry name" value="Enolpyruvate transferase domain"/>
    <property type="match status" value="2"/>
</dbReference>
<dbReference type="HAMAP" id="MF_00210">
    <property type="entry name" value="EPSP_synth"/>
    <property type="match status" value="1"/>
</dbReference>
<dbReference type="InterPro" id="IPR001986">
    <property type="entry name" value="Enolpyruvate_Tfrase_dom"/>
</dbReference>
<dbReference type="InterPro" id="IPR036968">
    <property type="entry name" value="Enolpyruvate_Tfrase_sf"/>
</dbReference>
<dbReference type="InterPro" id="IPR006264">
    <property type="entry name" value="EPSP_synthase"/>
</dbReference>
<dbReference type="InterPro" id="IPR023193">
    <property type="entry name" value="EPSP_synthase_CS"/>
</dbReference>
<dbReference type="InterPro" id="IPR013792">
    <property type="entry name" value="RNA3'P_cycl/enolpyr_Trfase_a/b"/>
</dbReference>
<dbReference type="NCBIfam" id="TIGR01356">
    <property type="entry name" value="aroA"/>
    <property type="match status" value="1"/>
</dbReference>
<dbReference type="PANTHER" id="PTHR21090">
    <property type="entry name" value="AROM/DEHYDROQUINATE SYNTHASE"/>
    <property type="match status" value="1"/>
</dbReference>
<dbReference type="PANTHER" id="PTHR21090:SF5">
    <property type="entry name" value="PENTAFUNCTIONAL AROM POLYPEPTIDE"/>
    <property type="match status" value="1"/>
</dbReference>
<dbReference type="Pfam" id="PF00275">
    <property type="entry name" value="EPSP_synthase"/>
    <property type="match status" value="1"/>
</dbReference>
<dbReference type="PIRSF" id="PIRSF000505">
    <property type="entry name" value="EPSPS"/>
    <property type="match status" value="1"/>
</dbReference>
<dbReference type="SUPFAM" id="SSF55205">
    <property type="entry name" value="EPT/RTPC-like"/>
    <property type="match status" value="1"/>
</dbReference>
<dbReference type="PROSITE" id="PS00104">
    <property type="entry name" value="EPSP_SYNTHASE_1"/>
    <property type="match status" value="1"/>
</dbReference>
<dbReference type="PROSITE" id="PS00885">
    <property type="entry name" value="EPSP_SYNTHASE_2"/>
    <property type="match status" value="1"/>
</dbReference>
<reference key="1">
    <citation type="submission" date="2000-12" db="EMBL/GenBank/DDBJ databases">
        <title>Characterization of the aroA gene of Brucella abortus and construction of an aroA mutant.</title>
        <authorList>
            <person name="Gan T."/>
            <person name="Essenberg R.C."/>
        </authorList>
    </citation>
    <scope>NUCLEOTIDE SEQUENCE [GENOMIC DNA]</scope>
</reference>
<reference key="2">
    <citation type="journal article" date="2005" name="Infect. Immun.">
        <title>Whole-genome analyses of speciation events in pathogenic Brucellae.</title>
        <authorList>
            <person name="Chain P.S."/>
            <person name="Comerci D.J."/>
            <person name="Tolmasky M.E."/>
            <person name="Larimer F.W."/>
            <person name="Malfatti S.A."/>
            <person name="Vergez L.M."/>
            <person name="Aguero F."/>
            <person name="Land M.L."/>
            <person name="Ugalde R.A."/>
            <person name="Garcia E."/>
        </authorList>
    </citation>
    <scope>NUCLEOTIDE SEQUENCE [LARGE SCALE GENOMIC DNA]</scope>
    <source>
        <strain>2308</strain>
    </source>
</reference>
<evidence type="ECO:0000255" key="1">
    <source>
        <dbReference type="HAMAP-Rule" id="MF_00210"/>
    </source>
</evidence>
<evidence type="ECO:0000305" key="2"/>
<feature type="chain" id="PRO_0000088232" description="3-phosphoshikimate 1-carboxyvinyltransferase">
    <location>
        <begin position="1"/>
        <end position="450"/>
    </location>
</feature>
<feature type="active site" description="Proton acceptor" evidence="1">
    <location>
        <position position="326"/>
    </location>
</feature>
<feature type="binding site" evidence="1">
    <location>
        <position position="28"/>
    </location>
    <ligand>
        <name>3-phosphoshikimate</name>
        <dbReference type="ChEBI" id="CHEBI:145989"/>
    </ligand>
</feature>
<feature type="binding site" evidence="1">
    <location>
        <position position="28"/>
    </location>
    <ligand>
        <name>phosphoenolpyruvate</name>
        <dbReference type="ChEBI" id="CHEBI:58702"/>
    </ligand>
</feature>
<feature type="binding site" evidence="1">
    <location>
        <position position="29"/>
    </location>
    <ligand>
        <name>3-phosphoshikimate</name>
        <dbReference type="ChEBI" id="CHEBI:145989"/>
    </ligand>
</feature>
<feature type="binding site" evidence="1">
    <location>
        <position position="33"/>
    </location>
    <ligand>
        <name>3-phosphoshikimate</name>
        <dbReference type="ChEBI" id="CHEBI:145989"/>
    </ligand>
</feature>
<feature type="binding site" evidence="1">
    <location>
        <position position="100"/>
    </location>
    <ligand>
        <name>phosphoenolpyruvate</name>
        <dbReference type="ChEBI" id="CHEBI:58702"/>
    </ligand>
</feature>
<feature type="binding site" evidence="1">
    <location>
        <position position="128"/>
    </location>
    <ligand>
        <name>phosphoenolpyruvate</name>
        <dbReference type="ChEBI" id="CHEBI:58702"/>
    </ligand>
</feature>
<feature type="binding site" evidence="1">
    <location>
        <position position="173"/>
    </location>
    <ligand>
        <name>3-phosphoshikimate</name>
        <dbReference type="ChEBI" id="CHEBI:145989"/>
    </ligand>
</feature>
<feature type="binding site" evidence="1">
    <location>
        <position position="175"/>
    </location>
    <ligand>
        <name>3-phosphoshikimate</name>
        <dbReference type="ChEBI" id="CHEBI:145989"/>
    </ligand>
</feature>
<feature type="binding site" evidence="1">
    <location>
        <position position="175"/>
    </location>
    <ligand>
        <name>phosphoenolpyruvate</name>
        <dbReference type="ChEBI" id="CHEBI:58702"/>
    </ligand>
</feature>
<feature type="binding site" evidence="1">
    <location>
        <position position="326"/>
    </location>
    <ligand>
        <name>3-phosphoshikimate</name>
        <dbReference type="ChEBI" id="CHEBI:145989"/>
    </ligand>
</feature>
<feature type="binding site" evidence="1">
    <location>
        <position position="353"/>
    </location>
    <ligand>
        <name>3-phosphoshikimate</name>
        <dbReference type="ChEBI" id="CHEBI:145989"/>
    </ligand>
</feature>
<feature type="binding site" evidence="1">
    <location>
        <position position="357"/>
    </location>
    <ligand>
        <name>phosphoenolpyruvate</name>
        <dbReference type="ChEBI" id="CHEBI:58702"/>
    </ligand>
</feature>
<feature type="binding site" evidence="1">
    <location>
        <position position="402"/>
    </location>
    <ligand>
        <name>phosphoenolpyruvate</name>
        <dbReference type="ChEBI" id="CHEBI:58702"/>
    </ligand>
</feature>
<feature type="sequence conflict" description="In Ref. 1; AAK27445." evidence="2" ref="1">
    <original>H</original>
    <variation>T</variation>
    <location>
        <position position="32"/>
    </location>
</feature>
<feature type="sequence conflict" description="In Ref. 1; AAK27445." evidence="2" ref="1">
    <original>A</original>
    <variation>P</variation>
    <location>
        <position position="254"/>
    </location>
</feature>
<sequence length="450" mass="47235">MSHSACPKPATARHSQALTGEIRIPGDKSISHRSFMFGGLASGKTRITGLLEGEDVINTGRAMQAMGARIRKEGDVWIINGVGNGCLLQPEAPLDFGNAGTGARLTMGLVGTYDMKTSFIGDASLSKRPMGRVLNPLREMGVQVEAAEGDRMPLTLIGPRTANPIAYRVPMASAQVKSAVLLAGLNTPGVTTVIEPVMTRDHTEKMLQGFGADLTVETDKDGVRHIRIVGQGKLTGQTIDVPGDPSSTAFPLVAALLVEGSEVTIRNVLMNPTRTGLILTLQEMGADIEIIDPRLAGGEDVADLRVKASKLKGVVVPPERAPSMIDEYPVLAIAASFAEGETVMDGLDELRVKESDRLAAVARGLEANGVDCTEGEMSLTVRGRPGGKGLGGGTVATHLDHRIAMSFLVMGLASEKPVTVDDSTMIATSFPEFMGMMAGLGAKIAESGAE</sequence>
<accession>Q2YPN6</accession>
<accession>Q57FY8</accession>
<accession>Q9AGV2</accession>
<keyword id="KW-0028">Amino-acid biosynthesis</keyword>
<keyword id="KW-0057">Aromatic amino acid biosynthesis</keyword>
<keyword id="KW-0963">Cytoplasm</keyword>
<keyword id="KW-1185">Reference proteome</keyword>
<keyword id="KW-0808">Transferase</keyword>
<proteinExistence type="inferred from homology"/>